<gene>
    <name type="primary">Qrfpr</name>
    <name type="synonym">Gpr103</name>
</gene>
<comment type="function">
    <text evidence="1">Receptor for the orexigenic neuropeptide QRFP. The activity of this receptor is mediated by G proteins that modulate adenylate cyclase activity and intracellular calcium levels (By similarity).</text>
</comment>
<comment type="subcellular location">
    <subcellularLocation>
        <location>Cell membrane</location>
        <topology>Multi-pass membrane protein</topology>
    </subcellularLocation>
</comment>
<comment type="tissue specificity">
    <text evidence="4 6">Expressed widely in the brain with high levels in the cortex and hypothalamus, and moderate levels in the brain stem, caudate nucleus, midbrain hippocampus, thalamus, trigeminal ganglia and spinal cord. Particularly strong expression detected in the mitral cell layer of the olfactory bulb, accessory olfactory bulb, island of Calleja and nucleus of the solitary tract. In peripheral tissues, expressed at moderate levels in the eye, liver, kidney, pituitary gland, testis and thymus.</text>
</comment>
<comment type="similarity">
    <text evidence="3">Belongs to the G-protein coupled receptor 1 family.</text>
</comment>
<reference evidence="7" key="1">
    <citation type="journal article" date="2003" name="J. Biol. Chem.">
        <title>Identification and characterization of a novel RF-amide peptide ligand for orphan G-protein-coupled receptor SP9155.</title>
        <authorList>
            <person name="Jiang Y."/>
            <person name="Luo L."/>
            <person name="Gustafson E.L."/>
            <person name="Yadav D."/>
            <person name="Laverty M."/>
            <person name="Murgolo N."/>
            <person name="Vassileva G."/>
            <person name="Zeng M."/>
            <person name="Laz T.M."/>
            <person name="Behan J."/>
            <person name="Qiu P."/>
            <person name="Wang L."/>
            <person name="Wang S."/>
            <person name="Bayne M."/>
            <person name="Greene J."/>
            <person name="Monsma F.J. Jr."/>
            <person name="Zhang F.L."/>
        </authorList>
    </citation>
    <scope>NUCLEOTIDE SEQUENCE [MRNA]</scope>
    <scope>TISSUE SPECIFICITY</scope>
</reference>
<reference evidence="7" key="2">
    <citation type="journal article" date="2003" name="J. Biol. Chem.">
        <title>A new peptidic ligand and its receptor regulating adrenal function in rats.</title>
        <authorList>
            <person name="Fukusumi S."/>
            <person name="Yoshida H."/>
            <person name="Fujii R."/>
            <person name="Maruyama M."/>
            <person name="Komatsu H."/>
            <person name="Habata Y."/>
            <person name="Shintani Y."/>
            <person name="Hinuma S."/>
            <person name="Fujino M."/>
        </authorList>
    </citation>
    <scope>NUCLEOTIDE SEQUENCE [MRNA]</scope>
    <source>
        <tissue evidence="5">Brain</tissue>
    </source>
</reference>
<reference key="3">
    <citation type="journal article" date="2006" name="Proc. Natl. Acad. Sci. U.S.A.">
        <title>A neuropeptide ligand of the G protein-coupled receptor GPR103 regulates feeding, behavioral arousal, and blood pressure in mice.</title>
        <authorList>
            <person name="Takayasu S."/>
            <person name="Sakurai T."/>
            <person name="Iwasaki S."/>
            <person name="Teranishi H."/>
            <person name="Yamanaka A."/>
            <person name="Williams S.C."/>
            <person name="Iguchi H."/>
            <person name="Kawasawa Y.I."/>
            <person name="Ikeda Y."/>
            <person name="Sakakibara I."/>
            <person name="Ohno K."/>
            <person name="Ioka R.X."/>
            <person name="Murakami S."/>
            <person name="Dohmae N."/>
            <person name="Xie J."/>
            <person name="Suda T."/>
            <person name="Motoike T."/>
            <person name="Ohuchi T."/>
            <person name="Yanagisawa M."/>
            <person name="Sakai J."/>
        </authorList>
    </citation>
    <scope>TISSUE SPECIFICITY</scope>
</reference>
<dbReference type="EMBL" id="AB109631">
    <property type="protein sequence ID" value="BAC98940.1"/>
    <property type="molecule type" value="mRNA"/>
</dbReference>
<dbReference type="CCDS" id="CCDS17311.1"/>
<dbReference type="RefSeq" id="NP_937835.1">
    <property type="nucleotide sequence ID" value="NM_198192.3"/>
</dbReference>
<dbReference type="SMR" id="P83861"/>
<dbReference type="CORUM" id="P83861"/>
<dbReference type="FunCoup" id="P83861">
    <property type="interactions" value="490"/>
</dbReference>
<dbReference type="STRING" id="10090.ENSMUSP00000088768"/>
<dbReference type="GuidetoPHARMACOLOGY" id="333"/>
<dbReference type="GlyCosmos" id="P83861">
    <property type="glycosylation" value="2 sites, No reported glycans"/>
</dbReference>
<dbReference type="GlyGen" id="P83861">
    <property type="glycosylation" value="2 sites"/>
</dbReference>
<dbReference type="PhosphoSitePlus" id="P83861"/>
<dbReference type="PaxDb" id="10090-ENSMUSP00000088768"/>
<dbReference type="Antibodypedia" id="2965">
    <property type="antibodies" value="274 antibodies from 31 providers"/>
</dbReference>
<dbReference type="Ensembl" id="ENSMUST00000091227.9">
    <property type="protein sequence ID" value="ENSMUSP00000088768.6"/>
    <property type="gene ID" value="ENSMUSG00000058400.14"/>
</dbReference>
<dbReference type="GeneID" id="229214"/>
<dbReference type="KEGG" id="mmu:229214"/>
<dbReference type="UCSC" id="uc008ozh.1">
    <property type="organism name" value="mouse"/>
</dbReference>
<dbReference type="AGR" id="MGI:2677633"/>
<dbReference type="CTD" id="84109"/>
<dbReference type="MGI" id="MGI:2677633">
    <property type="gene designation" value="Qrfpr"/>
</dbReference>
<dbReference type="VEuPathDB" id="HostDB:ENSMUSG00000058400"/>
<dbReference type="eggNOG" id="ENOG502QW2F">
    <property type="taxonomic scope" value="Eukaryota"/>
</dbReference>
<dbReference type="GeneTree" id="ENSGT01130000278294"/>
<dbReference type="InParanoid" id="P83861"/>
<dbReference type="OMA" id="IHMMIEY"/>
<dbReference type="OrthoDB" id="9979846at2759"/>
<dbReference type="PhylomeDB" id="P83861"/>
<dbReference type="TreeFam" id="TF315303"/>
<dbReference type="BioGRID-ORCS" id="229214">
    <property type="hits" value="0 hits in 78 CRISPR screens"/>
</dbReference>
<dbReference type="PRO" id="PR:P83861"/>
<dbReference type="Proteomes" id="UP000000589">
    <property type="component" value="Chromosome 3"/>
</dbReference>
<dbReference type="RNAct" id="P83861">
    <property type="molecule type" value="protein"/>
</dbReference>
<dbReference type="Bgee" id="ENSMUSG00000058400">
    <property type="expression patterns" value="Expressed in ventromedial nucleus of hypothalamus and 34 other cell types or tissues"/>
</dbReference>
<dbReference type="ExpressionAtlas" id="P83861">
    <property type="expression patterns" value="baseline and differential"/>
</dbReference>
<dbReference type="GO" id="GO:0097730">
    <property type="term" value="C:non-motile cilium"/>
    <property type="evidence" value="ECO:0000314"/>
    <property type="project" value="MGI"/>
</dbReference>
<dbReference type="GO" id="GO:0005886">
    <property type="term" value="C:plasma membrane"/>
    <property type="evidence" value="ECO:0007669"/>
    <property type="project" value="UniProtKB-SubCell"/>
</dbReference>
<dbReference type="GO" id="GO:0004930">
    <property type="term" value="F:G protein-coupled receptor activity"/>
    <property type="evidence" value="ECO:0000250"/>
    <property type="project" value="UniProtKB"/>
</dbReference>
<dbReference type="GO" id="GO:0004983">
    <property type="term" value="F:neuropeptide Y receptor activity"/>
    <property type="evidence" value="ECO:0007669"/>
    <property type="project" value="InterPro"/>
</dbReference>
<dbReference type="GO" id="GO:0007186">
    <property type="term" value="P:G protein-coupled receptor signaling pathway"/>
    <property type="evidence" value="ECO:0000250"/>
    <property type="project" value="UniProtKB"/>
</dbReference>
<dbReference type="CDD" id="cd15205">
    <property type="entry name" value="7tmA_QRFPR"/>
    <property type="match status" value="1"/>
</dbReference>
<dbReference type="FunFam" id="1.20.1070.10:FF:000227">
    <property type="entry name" value="Pyroglutamylated RFamide peptide receptor a"/>
    <property type="match status" value="1"/>
</dbReference>
<dbReference type="Gene3D" id="1.20.1070.10">
    <property type="entry name" value="Rhodopsin 7-helix transmembrane proteins"/>
    <property type="match status" value="1"/>
</dbReference>
<dbReference type="InterPro" id="IPR000276">
    <property type="entry name" value="GPCR_Rhodpsn"/>
</dbReference>
<dbReference type="InterPro" id="IPR017452">
    <property type="entry name" value="GPCR_Rhodpsn_7TM"/>
</dbReference>
<dbReference type="InterPro" id="IPR000611">
    <property type="entry name" value="NPY_rcpt"/>
</dbReference>
<dbReference type="PANTHER" id="PTHR45695">
    <property type="entry name" value="LEUCOKININ RECEPTOR-RELATED"/>
    <property type="match status" value="1"/>
</dbReference>
<dbReference type="PANTHER" id="PTHR45695:SF20">
    <property type="entry name" value="PYROGLUTAMYLATED RFAMIDE PEPTIDE RECEPTOR"/>
    <property type="match status" value="1"/>
</dbReference>
<dbReference type="Pfam" id="PF00001">
    <property type="entry name" value="7tm_1"/>
    <property type="match status" value="1"/>
</dbReference>
<dbReference type="PRINTS" id="PR00237">
    <property type="entry name" value="GPCRRHODOPSN"/>
</dbReference>
<dbReference type="PRINTS" id="PR01012">
    <property type="entry name" value="NRPEPTIDEYR"/>
</dbReference>
<dbReference type="SUPFAM" id="SSF81321">
    <property type="entry name" value="Family A G protein-coupled receptor-like"/>
    <property type="match status" value="1"/>
</dbReference>
<dbReference type="PROSITE" id="PS00237">
    <property type="entry name" value="G_PROTEIN_RECEP_F1_1"/>
    <property type="match status" value="1"/>
</dbReference>
<dbReference type="PROSITE" id="PS50262">
    <property type="entry name" value="G_PROTEIN_RECEP_F1_2"/>
    <property type="match status" value="1"/>
</dbReference>
<proteinExistence type="evidence at transcript level"/>
<organism evidence="8">
    <name type="scientific">Mus musculus</name>
    <name type="common">Mouse</name>
    <dbReference type="NCBI Taxonomy" id="10090"/>
    <lineage>
        <taxon>Eukaryota</taxon>
        <taxon>Metazoa</taxon>
        <taxon>Chordata</taxon>
        <taxon>Craniata</taxon>
        <taxon>Vertebrata</taxon>
        <taxon>Euteleostomi</taxon>
        <taxon>Mammalia</taxon>
        <taxon>Eutheria</taxon>
        <taxon>Euarchontoglires</taxon>
        <taxon>Glires</taxon>
        <taxon>Rodentia</taxon>
        <taxon>Myomorpha</taxon>
        <taxon>Muroidea</taxon>
        <taxon>Muridae</taxon>
        <taxon>Murinae</taxon>
        <taxon>Mus</taxon>
        <taxon>Mus</taxon>
    </lineage>
</organism>
<feature type="chain" id="PRO_0000070098" description="Pyroglutamylated RF-amide peptide receptor">
    <location>
        <begin position="1"/>
        <end position="433"/>
    </location>
</feature>
<feature type="topological domain" description="Extracellular" evidence="2">
    <location>
        <begin position="1"/>
        <end position="46"/>
    </location>
</feature>
<feature type="transmembrane region" description="Helical; Name=1" evidence="2">
    <location>
        <begin position="47"/>
        <end position="67"/>
    </location>
</feature>
<feature type="topological domain" description="Cytoplasmic" evidence="2">
    <location>
        <begin position="68"/>
        <end position="81"/>
    </location>
</feature>
<feature type="transmembrane region" description="Helical; Name=2" evidence="2">
    <location>
        <begin position="82"/>
        <end position="102"/>
    </location>
</feature>
<feature type="topological domain" description="Extracellular" evidence="2">
    <location>
        <begin position="103"/>
        <end position="120"/>
    </location>
</feature>
<feature type="transmembrane region" description="Helical; Name=3" evidence="2">
    <location>
        <begin position="121"/>
        <end position="141"/>
    </location>
</feature>
<feature type="topological domain" description="Cytoplasmic" evidence="2">
    <location>
        <begin position="142"/>
        <end position="162"/>
    </location>
</feature>
<feature type="transmembrane region" description="Helical; Name=4" evidence="2">
    <location>
        <begin position="163"/>
        <end position="183"/>
    </location>
</feature>
<feature type="topological domain" description="Extracellular" evidence="2">
    <location>
        <begin position="184"/>
        <end position="212"/>
    </location>
</feature>
<feature type="transmembrane region" description="Helical; Name=5" evidence="2">
    <location>
        <begin position="213"/>
        <end position="233"/>
    </location>
</feature>
<feature type="topological domain" description="Cytoplasmic" evidence="2">
    <location>
        <begin position="234"/>
        <end position="271"/>
    </location>
</feature>
<feature type="transmembrane region" description="Helical; Name=6" evidence="2">
    <location>
        <begin position="272"/>
        <end position="292"/>
    </location>
</feature>
<feature type="topological domain" description="Extracellular" evidence="2">
    <location>
        <begin position="293"/>
        <end position="313"/>
    </location>
</feature>
<feature type="transmembrane region" description="Helical; Name=7" evidence="2">
    <location>
        <begin position="314"/>
        <end position="334"/>
    </location>
</feature>
<feature type="topological domain" description="Cytoplasmic" evidence="2">
    <location>
        <begin position="335"/>
        <end position="433"/>
    </location>
</feature>
<feature type="glycosylation site" description="N-linked (GlcNAc...) asparagine" evidence="2">
    <location>
        <position position="5"/>
    </location>
</feature>
<feature type="glycosylation site" description="N-linked (GlcNAc...) asparagine" evidence="2">
    <location>
        <position position="19"/>
    </location>
</feature>
<keyword id="KW-1003">Cell membrane</keyword>
<keyword id="KW-0297">G-protein coupled receptor</keyword>
<keyword id="KW-0325">Glycoprotein</keyword>
<keyword id="KW-0472">Membrane</keyword>
<keyword id="KW-0675">Receptor</keyword>
<keyword id="KW-1185">Reference proteome</keyword>
<keyword id="KW-0807">Transducer</keyword>
<keyword id="KW-0812">Transmembrane</keyword>
<keyword id="KW-1133">Transmembrane helix</keyword>
<accession>P83861</accession>
<name>QRFPR_MOUSE</name>
<sequence length="433" mass="49245">MQALNITAEQFSRLLSAHNLTREQFIHRYGLRPLVYTPELPARAKLAFALAGALIFALALFGNSLVIYVVTRSKAMRTVTNIFICSLALSDLLIAFFCIPVTMLQNISDKWLGGAFICKMVPFVQSTAVVTEILTMTCIAVERHQGLIHPFKMKWQYTTRRAFTILGVVWLAAIIVGSPMWHVQRLEIKYDFLYEKEHVCCLEEWASPMHQRIYTTFILVILFLLPLVVMLVLYSKIGYELWIKKRVGDSSALQTIHGKEMSKIARKKKRAVVMMVTVVALFAACWAPFHVVHMMVEYSNFEKEYDDVTIKMVFAVAQTIGFFNSICNPFVYAFMNENFKKNFLSAVCYCIVRETFSPGQKPGNSGISMMQKRAKLSRSQRPVAEAKGDLFSDANVDVKLCEQPGEKRQLKRQLAFFSSELSENSTFGSGHEL</sequence>
<evidence type="ECO:0000250" key="1">
    <source>
        <dbReference type="UniProtKB" id="Q96P65"/>
    </source>
</evidence>
<evidence type="ECO:0000255" key="2"/>
<evidence type="ECO:0000255" key="3">
    <source>
        <dbReference type="PROSITE-ProRule" id="PRU00521"/>
    </source>
</evidence>
<evidence type="ECO:0000269" key="4">
    <source>
    </source>
</evidence>
<evidence type="ECO:0000269" key="5">
    <source>
    </source>
</evidence>
<evidence type="ECO:0000269" key="6">
    <source>
    </source>
</evidence>
<evidence type="ECO:0000305" key="7"/>
<evidence type="ECO:0000312" key="8">
    <source>
        <dbReference type="EMBL" id="BAC98940.1"/>
    </source>
</evidence>
<protein>
    <recommendedName>
        <fullName>Pyroglutamylated RF-amide peptide receptor</fullName>
    </recommendedName>
    <alternativeName>
        <fullName>AQ27</fullName>
    </alternativeName>
    <alternativeName>
        <fullName>G-protein coupled receptor 103</fullName>
    </alternativeName>
    <alternativeName>
        <fullName>Orexigenic neuropeptide QRFP receptor</fullName>
    </alternativeName>
    <alternativeName>
        <fullName>SP9155</fullName>
    </alternativeName>
</protein>